<reference key="1">
    <citation type="journal article" date="2020" name="Nat. Commun.">
        <title>A comparative genomics study of 23 Aspergillus species from section Flavi.</title>
        <authorList>
            <person name="Kjaerboelling I."/>
            <person name="Vesth T."/>
            <person name="Frisvad J.C."/>
            <person name="Nybo J.L."/>
            <person name="Theobald S."/>
            <person name="Kildgaard S."/>
            <person name="Petersen T.I."/>
            <person name="Kuo A."/>
            <person name="Sato A."/>
            <person name="Lyhne E.K."/>
            <person name="Kogle M.E."/>
            <person name="Wiebenga A."/>
            <person name="Kun R.S."/>
            <person name="Lubbers R.J.M."/>
            <person name="Maekelae M.R."/>
            <person name="Barry K."/>
            <person name="Chovatia M."/>
            <person name="Clum A."/>
            <person name="Daum C."/>
            <person name="Haridas S."/>
            <person name="He G."/>
            <person name="LaButti K."/>
            <person name="Lipzen A."/>
            <person name="Mondo S."/>
            <person name="Pangilinan J."/>
            <person name="Riley R."/>
            <person name="Salamov A."/>
            <person name="Simmons B.A."/>
            <person name="Magnuson J.K."/>
            <person name="Henrissat B."/>
            <person name="Mortensen U.H."/>
            <person name="Larsen T.O."/>
            <person name="de Vries R.P."/>
            <person name="Grigoriev I.V."/>
            <person name="Machida M."/>
            <person name="Baker S.E."/>
            <person name="Andersen M.R."/>
        </authorList>
    </citation>
    <scope>NUCLEOTIDE SEQUENCE [LARGE SCALE GENOMIC DNA]</scope>
    <source>
        <strain>CBS 117626</strain>
    </source>
</reference>
<reference key="2">
    <citation type="journal article" date="2018" name="Front. Bioeng. Biotechnol.">
        <title>Analysis of the Transcriptome in Aspergillus tamarii During Enzymatic Degradation of Sugarcane Bagasse.</title>
        <authorList>
            <person name="Midorikawa G.E.O."/>
            <person name="Correa C.L."/>
            <person name="Noronha E.F."/>
            <person name="Filho E.X.F."/>
            <person name="Togawa R.C."/>
            <person name="Costa M.M.D.C."/>
            <person name="Silva-Junior O.B."/>
            <person name="Grynberg P."/>
            <person name="Miller R.N.G."/>
        </authorList>
    </citation>
    <scope>INDUCTION</scope>
</reference>
<reference key="3">
    <citation type="journal article" date="2020" name="PLoS ONE">
        <title>Characterization of two family AA9 LPMOs from Aspergillus tamarii with distinct activities on xyloglucan reveals structural differences linked to cleavage specificity.</title>
        <authorList>
            <person name="Monclaro A.V."/>
            <person name="Petrovic D.M."/>
            <person name="Alves G.S.C."/>
            <person name="Costa M.M.C."/>
            <person name="Midorikawa G.E.O."/>
            <person name="Miller R.N.G."/>
            <person name="Filho E.X.F."/>
            <person name="Eijsink V.G.H."/>
            <person name="Varnai A."/>
        </authorList>
    </citation>
    <scope>FUNCTION</scope>
    <scope>CATALYTIC ACTIVITY</scope>
</reference>
<name>LP9D_ASPTM</name>
<sequence length="275" mass="30016">MKLSLLAIAAIAPFVSAHYFFDTLIIDGQESSPNQYVRSNTRAAKYNPTKWVNTRDNMTPDMPDFRCNKGAFTFAGQTGTAEVKAGSKLALKLGVGATMKHPGPALVYMSKAPSTAKTYQGDGDWFKIYEEGVCDKNKDLKSDAWCSWDKDRVEFTIPADLPDGEYLIRPEHIGVHGAHAGEAEFYYSCAQVKVVGGGNGNPGPTVKFPGAYKKDDPSFNFSIYGGYKEYPMPGPEVWSGASGSKSYSKVVNVNAADATSEGTFGHREHARDFNY</sequence>
<evidence type="ECO:0000250" key="1">
    <source>
        <dbReference type="UniProtKB" id="Q1K8B6"/>
    </source>
</evidence>
<evidence type="ECO:0000250" key="2">
    <source>
        <dbReference type="UniProtKB" id="Q4WP32"/>
    </source>
</evidence>
<evidence type="ECO:0000255" key="3"/>
<evidence type="ECO:0000255" key="4">
    <source>
        <dbReference type="PROSITE-ProRule" id="PRU00498"/>
    </source>
</evidence>
<evidence type="ECO:0000269" key="5">
    <source>
    </source>
</evidence>
<evidence type="ECO:0000303" key="6">
    <source>
    </source>
</evidence>
<evidence type="ECO:0000305" key="7"/>
<evidence type="ECO:0000305" key="8">
    <source>
    </source>
</evidence>
<dbReference type="EC" id="1.14.99.56" evidence="8"/>
<dbReference type="EMBL" id="ML738631">
    <property type="protein sequence ID" value="KAE8162267.1"/>
    <property type="molecule type" value="Genomic_DNA"/>
</dbReference>
<dbReference type="SMR" id="A0A5N6UUF2"/>
<dbReference type="OrthoDB" id="3496539at2759"/>
<dbReference type="Proteomes" id="UP000326950">
    <property type="component" value="Unassembled WGS sequence"/>
</dbReference>
<dbReference type="GO" id="GO:0005576">
    <property type="term" value="C:extracellular region"/>
    <property type="evidence" value="ECO:0007669"/>
    <property type="project" value="UniProtKB-SubCell"/>
</dbReference>
<dbReference type="GO" id="GO:0046872">
    <property type="term" value="F:metal ion binding"/>
    <property type="evidence" value="ECO:0007669"/>
    <property type="project" value="UniProtKB-KW"/>
</dbReference>
<dbReference type="GO" id="GO:0004497">
    <property type="term" value="F:monooxygenase activity"/>
    <property type="evidence" value="ECO:0007669"/>
    <property type="project" value="UniProtKB-KW"/>
</dbReference>
<dbReference type="GO" id="GO:0030245">
    <property type="term" value="P:cellulose catabolic process"/>
    <property type="evidence" value="ECO:0007669"/>
    <property type="project" value="UniProtKB-KW"/>
</dbReference>
<dbReference type="CDD" id="cd21175">
    <property type="entry name" value="LPMO_AA9"/>
    <property type="match status" value="1"/>
</dbReference>
<dbReference type="Gene3D" id="2.70.50.70">
    <property type="match status" value="1"/>
</dbReference>
<dbReference type="InterPro" id="IPR049892">
    <property type="entry name" value="AA9"/>
</dbReference>
<dbReference type="InterPro" id="IPR005103">
    <property type="entry name" value="AA9_LPMO"/>
</dbReference>
<dbReference type="PANTHER" id="PTHR33353:SF2">
    <property type="entry name" value="ENDO-BETA-1,4-GLUCANASE D"/>
    <property type="match status" value="1"/>
</dbReference>
<dbReference type="PANTHER" id="PTHR33353">
    <property type="entry name" value="PUTATIVE (AFU_ORTHOLOGUE AFUA_1G12560)-RELATED"/>
    <property type="match status" value="1"/>
</dbReference>
<dbReference type="Pfam" id="PF03443">
    <property type="entry name" value="AA9"/>
    <property type="match status" value="1"/>
</dbReference>
<comment type="function">
    <text evidence="8">Lytic polysaccharide monooxygenase (LPMO) that depolymerizes crystalline and amorphous polysaccharides via the oxidation of scissile alpha- or beta-(1-4)-glycosidic bonds, yielding C1 or C4 oxidation products (Probable). Catalysis by LPMOs requires the reduction of the active-site copper from Cu(II) to Cu(I) by a reducing agent and H(2)O(2) or O(2) as a cosubstrate (Probable).</text>
</comment>
<comment type="catalytic activity">
    <reaction evidence="8">
        <text>[(1-&gt;4)-beta-D-glucosyl]n+m + reduced acceptor + O2 = 4-dehydro-beta-D-glucosyl-[(1-&gt;4)-beta-D-glucosyl]n-1 + [(1-&gt;4)-beta-D-glucosyl]m + acceptor + H2O.</text>
        <dbReference type="EC" id="1.14.99.56"/>
    </reaction>
</comment>
<comment type="cofactor">
    <cofactor evidence="2">
        <name>Cu(2+)</name>
        <dbReference type="ChEBI" id="CHEBI:29036"/>
    </cofactor>
    <text evidence="2">Binds 1 copper ion per subunit.</text>
</comment>
<comment type="subcellular location">
    <subcellularLocation>
        <location evidence="8">Secreted</location>
    </subcellularLocation>
</comment>
<comment type="induction">
    <text evidence="5">Expression is up-regulated on steam-exploded bagasse as carbon source compared to glucose.</text>
</comment>
<comment type="biotechnology">
    <text evidence="2">Lignocellulose is the most abundant polymeric composite on Earth and is a recalcitrant but promising renewable substrate for industrial biotechnology applications. Together with cellobiose dehydrogenases (CDHs) an enzymatic system capable of oxidative cellulose cleavage is formed, which increases the efficiency of cellulases and put LPMOs at focus of biofuel research.</text>
</comment>
<comment type="similarity">
    <text evidence="7">Belongs to the polysaccharide monooxygenase AA9 family.</text>
</comment>
<gene>
    <name type="ORF">BDV40DRAFT_312543</name>
</gene>
<organism>
    <name type="scientific">Aspergillus tamarii</name>
    <dbReference type="NCBI Taxonomy" id="41984"/>
    <lineage>
        <taxon>Eukaryota</taxon>
        <taxon>Fungi</taxon>
        <taxon>Dikarya</taxon>
        <taxon>Ascomycota</taxon>
        <taxon>Pezizomycotina</taxon>
        <taxon>Eurotiomycetes</taxon>
        <taxon>Eurotiomycetidae</taxon>
        <taxon>Eurotiales</taxon>
        <taxon>Aspergillaceae</taxon>
        <taxon>Aspergillus</taxon>
        <taxon>Aspergillus subgen. Circumdati</taxon>
    </lineage>
</organism>
<protein>
    <recommendedName>
        <fullName evidence="6">AA9 family lytic polysaccharide monooxygenase D</fullName>
        <shortName evidence="6">AtAA9D</shortName>
        <ecNumber evidence="8">1.14.99.56</ecNumber>
    </recommendedName>
    <alternativeName>
        <fullName evidence="7">Cellulase AA9D</fullName>
    </alternativeName>
    <alternativeName>
        <fullName evidence="7">Endo-beta-1,4-glucanase AA9D</fullName>
        <shortName evidence="7">Endoglucanase AA9D</shortName>
    </alternativeName>
    <alternativeName>
        <fullName evidence="7">Glycosyl hydrolase 61 family protein AA9D</fullName>
    </alternativeName>
</protein>
<feature type="signal peptide" evidence="3">
    <location>
        <begin position="1"/>
        <end position="17"/>
    </location>
</feature>
<feature type="chain" id="PRO_5025009382" description="AA9 family lytic polysaccharide monooxygenase D">
    <location>
        <begin position="18"/>
        <end position="275"/>
    </location>
</feature>
<feature type="binding site" evidence="2">
    <location>
        <position position="18"/>
    </location>
    <ligand>
        <name>Cu(2+)</name>
        <dbReference type="ChEBI" id="CHEBI:29036"/>
        <note>catalytic</note>
    </ligand>
</feature>
<feature type="binding site" evidence="2">
    <location>
        <position position="101"/>
    </location>
    <ligand>
        <name>Cu(2+)</name>
        <dbReference type="ChEBI" id="CHEBI:29036"/>
        <note>catalytic</note>
    </ligand>
</feature>
<feature type="binding site" evidence="1">
    <location>
        <position position="176"/>
    </location>
    <ligand>
        <name>O2</name>
        <dbReference type="ChEBI" id="CHEBI:15379"/>
    </ligand>
</feature>
<feature type="binding site" evidence="2">
    <location>
        <position position="186"/>
    </location>
    <ligand>
        <name>Cu(2+)</name>
        <dbReference type="ChEBI" id="CHEBI:29036"/>
        <note>catalytic</note>
    </ligand>
</feature>
<feature type="glycosylation site" description="N-linked (GlcNAc...) asparagine" evidence="4">
    <location>
        <position position="220"/>
    </location>
</feature>
<feature type="disulfide bond" evidence="2">
    <location>
        <begin position="67"/>
        <end position="189"/>
    </location>
</feature>
<keyword id="KW-0119">Carbohydrate metabolism</keyword>
<keyword id="KW-0136">Cellulose degradation</keyword>
<keyword id="KW-0186">Copper</keyword>
<keyword id="KW-1015">Disulfide bond</keyword>
<keyword id="KW-0325">Glycoprotein</keyword>
<keyword id="KW-0479">Metal-binding</keyword>
<keyword id="KW-0503">Monooxygenase</keyword>
<keyword id="KW-0560">Oxidoreductase</keyword>
<keyword id="KW-0624">Polysaccharide degradation</keyword>
<keyword id="KW-1185">Reference proteome</keyword>
<keyword id="KW-0964">Secreted</keyword>
<keyword id="KW-0732">Signal</keyword>
<accession>A0A5N6UUF2</accession>
<proteinExistence type="evidence at protein level"/>